<sequence length="417" mass="47842">MLDLHYITENTEDLKKVLELRGFKEVGIIDELKSIIQRKRELQREVDLLREERNKVSKEVGRIKQSGGDITEISASVKLVGEKIKEIETKLEQEENVLININLGLPNILDPKVPNGKSEYDNVVQYEVGKIPSFSFPPKPHFEIGEALNWINFEKGVKLSGARAYTYWKDGAKLERALMNFMLDVHTKEHGYTEVWVPSMVNDESMTATGQYPKFKDEFYRIEKDELNLIPTAEVPLTNLYRDEIIPEDQLPISVTAHTSCFRREAGSYGKDTRGLVRVHQFQKVELVKFCKPEDSEEEHKKMLSHAENILKKLKLPYRVIILCSGDISANSSITYDIEVWMPGLNRFMEISSVSNFRDFQARRGKIRYKSKDGKNQLVHTINGSGLAIGRTYAAILENFQDANGTVHIPEVLKSYF</sequence>
<comment type="function">
    <text evidence="1">Catalyzes the attachment of serine to tRNA(Ser). Is also able to aminoacylate tRNA(Sec) with serine, to form the misacylated tRNA L-seryl-tRNA(Sec), which will be further converted into selenocysteinyl-tRNA(Sec).</text>
</comment>
<comment type="catalytic activity">
    <reaction evidence="1">
        <text>tRNA(Ser) + L-serine + ATP = L-seryl-tRNA(Ser) + AMP + diphosphate + H(+)</text>
        <dbReference type="Rhea" id="RHEA:12292"/>
        <dbReference type="Rhea" id="RHEA-COMP:9669"/>
        <dbReference type="Rhea" id="RHEA-COMP:9703"/>
        <dbReference type="ChEBI" id="CHEBI:15378"/>
        <dbReference type="ChEBI" id="CHEBI:30616"/>
        <dbReference type="ChEBI" id="CHEBI:33019"/>
        <dbReference type="ChEBI" id="CHEBI:33384"/>
        <dbReference type="ChEBI" id="CHEBI:78442"/>
        <dbReference type="ChEBI" id="CHEBI:78533"/>
        <dbReference type="ChEBI" id="CHEBI:456215"/>
        <dbReference type="EC" id="6.1.1.11"/>
    </reaction>
</comment>
<comment type="catalytic activity">
    <reaction evidence="1">
        <text>tRNA(Sec) + L-serine + ATP = L-seryl-tRNA(Sec) + AMP + diphosphate + H(+)</text>
        <dbReference type="Rhea" id="RHEA:42580"/>
        <dbReference type="Rhea" id="RHEA-COMP:9742"/>
        <dbReference type="Rhea" id="RHEA-COMP:10128"/>
        <dbReference type="ChEBI" id="CHEBI:15378"/>
        <dbReference type="ChEBI" id="CHEBI:30616"/>
        <dbReference type="ChEBI" id="CHEBI:33019"/>
        <dbReference type="ChEBI" id="CHEBI:33384"/>
        <dbReference type="ChEBI" id="CHEBI:78442"/>
        <dbReference type="ChEBI" id="CHEBI:78533"/>
        <dbReference type="ChEBI" id="CHEBI:456215"/>
        <dbReference type="EC" id="6.1.1.11"/>
    </reaction>
</comment>
<comment type="pathway">
    <text evidence="1">Aminoacyl-tRNA biosynthesis; selenocysteinyl-tRNA(Sec) biosynthesis; L-seryl-tRNA(Sec) from L-serine and tRNA(Sec): step 1/1.</text>
</comment>
<comment type="subunit">
    <text evidence="1">Homodimer. The tRNA molecule binds across the dimer.</text>
</comment>
<comment type="subcellular location">
    <subcellularLocation>
        <location evidence="1">Cytoplasm</location>
    </subcellularLocation>
</comment>
<comment type="domain">
    <text evidence="1">Consists of two distinct domains, a catalytic core and a N-terminal extension that is involved in tRNA binding.</text>
</comment>
<comment type="similarity">
    <text evidence="1">Belongs to the class-II aminoacyl-tRNA synthetase family. Type-1 seryl-tRNA synthetase subfamily.</text>
</comment>
<reference key="1">
    <citation type="journal article" date="2006" name="Proc. Natl. Acad. Sci. U.S.A.">
        <title>Genome reduction in Leptospira borgpetersenii reflects limited transmission potential.</title>
        <authorList>
            <person name="Bulach D.M."/>
            <person name="Zuerner R.L."/>
            <person name="Wilson P."/>
            <person name="Seemann T."/>
            <person name="McGrath A."/>
            <person name="Cullen P.A."/>
            <person name="Davis J."/>
            <person name="Johnson M."/>
            <person name="Kuczek E."/>
            <person name="Alt D.P."/>
            <person name="Peterson-Burch B."/>
            <person name="Coppel R.L."/>
            <person name="Rood J.I."/>
            <person name="Davies J.K."/>
            <person name="Adler B."/>
        </authorList>
    </citation>
    <scope>NUCLEOTIDE SEQUENCE [LARGE SCALE GENOMIC DNA]</scope>
    <source>
        <strain>JB197</strain>
    </source>
</reference>
<protein>
    <recommendedName>
        <fullName evidence="1">Serine--tRNA ligase</fullName>
        <ecNumber evidence="1">6.1.1.11</ecNumber>
    </recommendedName>
    <alternativeName>
        <fullName evidence="1">Seryl-tRNA synthetase</fullName>
        <shortName evidence="1">SerRS</shortName>
    </alternativeName>
    <alternativeName>
        <fullName evidence="1">Seryl-tRNA(Ser/Sec) synthetase</fullName>
    </alternativeName>
</protein>
<feature type="chain" id="PRO_1000019717" description="Serine--tRNA ligase">
    <location>
        <begin position="1"/>
        <end position="417"/>
    </location>
</feature>
<feature type="binding site" evidence="1">
    <location>
        <begin position="232"/>
        <end position="234"/>
    </location>
    <ligand>
        <name>L-serine</name>
        <dbReference type="ChEBI" id="CHEBI:33384"/>
    </ligand>
</feature>
<feature type="binding site" evidence="1">
    <location>
        <begin position="263"/>
        <end position="265"/>
    </location>
    <ligand>
        <name>ATP</name>
        <dbReference type="ChEBI" id="CHEBI:30616"/>
    </ligand>
</feature>
<feature type="binding site" evidence="1">
    <location>
        <position position="279"/>
    </location>
    <ligand>
        <name>ATP</name>
        <dbReference type="ChEBI" id="CHEBI:30616"/>
    </ligand>
</feature>
<feature type="binding site" evidence="1">
    <location>
        <position position="286"/>
    </location>
    <ligand>
        <name>L-serine</name>
        <dbReference type="ChEBI" id="CHEBI:33384"/>
    </ligand>
</feature>
<feature type="binding site" evidence="1">
    <location>
        <begin position="350"/>
        <end position="353"/>
    </location>
    <ligand>
        <name>ATP</name>
        <dbReference type="ChEBI" id="CHEBI:30616"/>
    </ligand>
</feature>
<feature type="binding site" evidence="1">
    <location>
        <position position="385"/>
    </location>
    <ligand>
        <name>L-serine</name>
        <dbReference type="ChEBI" id="CHEBI:33384"/>
    </ligand>
</feature>
<organism>
    <name type="scientific">Leptospira borgpetersenii serovar Hardjo-bovis (strain JB197)</name>
    <dbReference type="NCBI Taxonomy" id="355277"/>
    <lineage>
        <taxon>Bacteria</taxon>
        <taxon>Pseudomonadati</taxon>
        <taxon>Spirochaetota</taxon>
        <taxon>Spirochaetia</taxon>
        <taxon>Leptospirales</taxon>
        <taxon>Leptospiraceae</taxon>
        <taxon>Leptospira</taxon>
    </lineage>
</organism>
<dbReference type="EC" id="6.1.1.11" evidence="1"/>
<dbReference type="EMBL" id="CP000350">
    <property type="protein sequence ID" value="ABJ74779.1"/>
    <property type="molecule type" value="Genomic_DNA"/>
</dbReference>
<dbReference type="RefSeq" id="WP_011671192.1">
    <property type="nucleotide sequence ID" value="NC_008510.1"/>
</dbReference>
<dbReference type="SMR" id="Q04WE1"/>
<dbReference type="KEGG" id="lbj:LBJ_0024"/>
<dbReference type="HOGENOM" id="CLU_023797_1_1_12"/>
<dbReference type="UniPathway" id="UPA00906">
    <property type="reaction ID" value="UER00895"/>
</dbReference>
<dbReference type="Proteomes" id="UP000000656">
    <property type="component" value="Chromosome 1"/>
</dbReference>
<dbReference type="GO" id="GO:0005737">
    <property type="term" value="C:cytoplasm"/>
    <property type="evidence" value="ECO:0007669"/>
    <property type="project" value="UniProtKB-SubCell"/>
</dbReference>
<dbReference type="GO" id="GO:0005524">
    <property type="term" value="F:ATP binding"/>
    <property type="evidence" value="ECO:0007669"/>
    <property type="project" value="UniProtKB-UniRule"/>
</dbReference>
<dbReference type="GO" id="GO:0004828">
    <property type="term" value="F:serine-tRNA ligase activity"/>
    <property type="evidence" value="ECO:0007669"/>
    <property type="project" value="UniProtKB-UniRule"/>
</dbReference>
<dbReference type="GO" id="GO:0016260">
    <property type="term" value="P:selenocysteine biosynthetic process"/>
    <property type="evidence" value="ECO:0007669"/>
    <property type="project" value="UniProtKB-UniRule"/>
</dbReference>
<dbReference type="GO" id="GO:0006434">
    <property type="term" value="P:seryl-tRNA aminoacylation"/>
    <property type="evidence" value="ECO:0007669"/>
    <property type="project" value="UniProtKB-UniRule"/>
</dbReference>
<dbReference type="CDD" id="cd00770">
    <property type="entry name" value="SerRS_core"/>
    <property type="match status" value="1"/>
</dbReference>
<dbReference type="Gene3D" id="3.30.930.10">
    <property type="entry name" value="Bira Bifunctional Protein, Domain 2"/>
    <property type="match status" value="1"/>
</dbReference>
<dbReference type="Gene3D" id="1.10.287.40">
    <property type="entry name" value="Serine-tRNA synthetase, tRNA binding domain"/>
    <property type="match status" value="1"/>
</dbReference>
<dbReference type="HAMAP" id="MF_00176">
    <property type="entry name" value="Ser_tRNA_synth_type1"/>
    <property type="match status" value="1"/>
</dbReference>
<dbReference type="InterPro" id="IPR002314">
    <property type="entry name" value="aa-tRNA-synt_IIb"/>
</dbReference>
<dbReference type="InterPro" id="IPR006195">
    <property type="entry name" value="aa-tRNA-synth_II"/>
</dbReference>
<dbReference type="InterPro" id="IPR045864">
    <property type="entry name" value="aa-tRNA-synth_II/BPL/LPL"/>
</dbReference>
<dbReference type="InterPro" id="IPR002317">
    <property type="entry name" value="Ser-tRNA-ligase_type_1"/>
</dbReference>
<dbReference type="InterPro" id="IPR015866">
    <property type="entry name" value="Ser-tRNA-synth_1_N"/>
</dbReference>
<dbReference type="InterPro" id="IPR042103">
    <property type="entry name" value="SerRS_1_N_sf"/>
</dbReference>
<dbReference type="InterPro" id="IPR033729">
    <property type="entry name" value="SerRS_core"/>
</dbReference>
<dbReference type="InterPro" id="IPR010978">
    <property type="entry name" value="tRNA-bd_arm"/>
</dbReference>
<dbReference type="NCBIfam" id="TIGR00414">
    <property type="entry name" value="serS"/>
    <property type="match status" value="1"/>
</dbReference>
<dbReference type="PANTHER" id="PTHR43697:SF1">
    <property type="entry name" value="SERINE--TRNA LIGASE"/>
    <property type="match status" value="1"/>
</dbReference>
<dbReference type="PANTHER" id="PTHR43697">
    <property type="entry name" value="SERYL-TRNA SYNTHETASE"/>
    <property type="match status" value="1"/>
</dbReference>
<dbReference type="Pfam" id="PF02403">
    <property type="entry name" value="Seryl_tRNA_N"/>
    <property type="match status" value="1"/>
</dbReference>
<dbReference type="Pfam" id="PF00587">
    <property type="entry name" value="tRNA-synt_2b"/>
    <property type="match status" value="1"/>
</dbReference>
<dbReference type="PIRSF" id="PIRSF001529">
    <property type="entry name" value="Ser-tRNA-synth_IIa"/>
    <property type="match status" value="1"/>
</dbReference>
<dbReference type="PRINTS" id="PR00981">
    <property type="entry name" value="TRNASYNTHSER"/>
</dbReference>
<dbReference type="SUPFAM" id="SSF55681">
    <property type="entry name" value="Class II aaRS and biotin synthetases"/>
    <property type="match status" value="1"/>
</dbReference>
<dbReference type="SUPFAM" id="SSF46589">
    <property type="entry name" value="tRNA-binding arm"/>
    <property type="match status" value="1"/>
</dbReference>
<dbReference type="PROSITE" id="PS50862">
    <property type="entry name" value="AA_TRNA_LIGASE_II"/>
    <property type="match status" value="1"/>
</dbReference>
<accession>Q04WE1</accession>
<keyword id="KW-0030">Aminoacyl-tRNA synthetase</keyword>
<keyword id="KW-0067">ATP-binding</keyword>
<keyword id="KW-0963">Cytoplasm</keyword>
<keyword id="KW-0436">Ligase</keyword>
<keyword id="KW-0547">Nucleotide-binding</keyword>
<keyword id="KW-0648">Protein biosynthesis</keyword>
<evidence type="ECO:0000255" key="1">
    <source>
        <dbReference type="HAMAP-Rule" id="MF_00176"/>
    </source>
</evidence>
<proteinExistence type="inferred from homology"/>
<name>SYS_LEPBJ</name>
<gene>
    <name evidence="1" type="primary">serS</name>
    <name type="ordered locus">LBJ_0024</name>
</gene>